<accession>Q52873</accession>
<name>TRA5_RHIME</name>
<reference key="1">
    <citation type="journal article" date="1995" name="J. Bacteriol.">
        <title>Characterization, nucleotide sequence, and conserved genomic locations of insertion sequence ISRm5 in Rhizobium meliloti.</title>
        <authorList>
            <person name="Laberge S."/>
            <person name="Middleton A.T."/>
            <person name="Wheatcroft R."/>
        </authorList>
    </citation>
    <scope>NUCLEOTIDE SEQUENCE [GENOMIC DNA]</scope>
    <source>
        <strain>IZ450</strain>
    </source>
</reference>
<reference key="2">
    <citation type="journal article" date="2001" name="Proc. Natl. Acad. Sci. U.S.A.">
        <title>Analysis of the chromosome sequence of the legume symbiont Sinorhizobium meliloti strain 1021.</title>
        <authorList>
            <person name="Capela D."/>
            <person name="Barloy-Hubler F."/>
            <person name="Gouzy J."/>
            <person name="Bothe G."/>
            <person name="Ampe F."/>
            <person name="Batut J."/>
            <person name="Boistard P."/>
            <person name="Becker A."/>
            <person name="Boutry M."/>
            <person name="Cadieu E."/>
            <person name="Dreano S."/>
            <person name="Gloux S."/>
            <person name="Godrie T."/>
            <person name="Goffeau A."/>
            <person name="Kahn D."/>
            <person name="Kiss E."/>
            <person name="Lelaure V."/>
            <person name="Masuy D."/>
            <person name="Pohl T."/>
            <person name="Portetelle D."/>
            <person name="Puehler A."/>
            <person name="Purnelle B."/>
            <person name="Ramsperger U."/>
            <person name="Renard C."/>
            <person name="Thebault P."/>
            <person name="Vandenbol M."/>
            <person name="Weidner S."/>
            <person name="Galibert F."/>
        </authorList>
    </citation>
    <scope>NUCLEOTIDE SEQUENCE [LARGE SCALE GENOMIC DNA]</scope>
    <source>
        <strain>1021</strain>
    </source>
</reference>
<reference key="3">
    <citation type="journal article" date="2001" name="Science">
        <title>The composite genome of the legume symbiont Sinorhizobium meliloti.</title>
        <authorList>
            <person name="Galibert F."/>
            <person name="Finan T.M."/>
            <person name="Long S.R."/>
            <person name="Puehler A."/>
            <person name="Abola P."/>
            <person name="Ampe F."/>
            <person name="Barloy-Hubler F."/>
            <person name="Barnett M.J."/>
            <person name="Becker A."/>
            <person name="Boistard P."/>
            <person name="Bothe G."/>
            <person name="Boutry M."/>
            <person name="Bowser L."/>
            <person name="Buhrmester J."/>
            <person name="Cadieu E."/>
            <person name="Capela D."/>
            <person name="Chain P."/>
            <person name="Cowie A."/>
            <person name="Davis R.W."/>
            <person name="Dreano S."/>
            <person name="Federspiel N.A."/>
            <person name="Fisher R.F."/>
            <person name="Gloux S."/>
            <person name="Godrie T."/>
            <person name="Goffeau A."/>
            <person name="Golding B."/>
            <person name="Gouzy J."/>
            <person name="Gurjal M."/>
            <person name="Hernandez-Lucas I."/>
            <person name="Hong A."/>
            <person name="Huizar L."/>
            <person name="Hyman R.W."/>
            <person name="Jones T."/>
            <person name="Kahn D."/>
            <person name="Kahn M.L."/>
            <person name="Kalman S."/>
            <person name="Keating D.H."/>
            <person name="Kiss E."/>
            <person name="Komp C."/>
            <person name="Lelaure V."/>
            <person name="Masuy D."/>
            <person name="Palm C."/>
            <person name="Peck M.C."/>
            <person name="Pohl T.M."/>
            <person name="Portetelle D."/>
            <person name="Purnelle B."/>
            <person name="Ramsperger U."/>
            <person name="Surzycki R."/>
            <person name="Thebault P."/>
            <person name="Vandenbol M."/>
            <person name="Vorhoelter F.J."/>
            <person name="Weidner S."/>
            <person name="Wells D.H."/>
            <person name="Wong K."/>
            <person name="Yeh K.-C."/>
            <person name="Batut J."/>
        </authorList>
    </citation>
    <scope>NUCLEOTIDE SEQUENCE [LARGE SCALE GENOMIC DNA]</scope>
    <source>
        <strain>1021</strain>
    </source>
</reference>
<dbReference type="EMBL" id="U08627">
    <property type="protein sequence ID" value="AAA81001.1"/>
    <property type="molecule type" value="Genomic_DNA"/>
</dbReference>
<dbReference type="EMBL" id="AL591688">
    <property type="protein sequence ID" value="CAC46803.1"/>
    <property type="molecule type" value="Genomic_DNA"/>
</dbReference>
<dbReference type="EMBL" id="AL591688">
    <property type="protein sequence ID" value="CAC46987.1"/>
    <property type="molecule type" value="Genomic_DNA"/>
</dbReference>
<dbReference type="EMBL" id="AL591688">
    <property type="protein sequence ID" value="CAC47345.1"/>
    <property type="molecule type" value="Genomic_DNA"/>
</dbReference>
<dbReference type="PIR" id="A57261">
    <property type="entry name" value="A57261"/>
</dbReference>
<dbReference type="RefSeq" id="NP_386330.1">
    <property type="nucleotide sequence ID" value="NC_003047.1"/>
</dbReference>
<dbReference type="RefSeq" id="NP_386514.1">
    <property type="nucleotide sequence ID" value="NC_003047.1"/>
</dbReference>
<dbReference type="RefSeq" id="NP_386872.1">
    <property type="nucleotide sequence ID" value="NC_003047.1"/>
</dbReference>
<dbReference type="RefSeq" id="WP_010969783.1">
    <property type="nucleotide sequence ID" value="NC_003047.1"/>
</dbReference>
<dbReference type="SMR" id="Q52873"/>
<dbReference type="EnsemblBacteria" id="CAC46803">
    <property type="protein sequence ID" value="CAC46803"/>
    <property type="gene ID" value="SMc01612"/>
</dbReference>
<dbReference type="EnsemblBacteria" id="CAC46987">
    <property type="protein sequence ID" value="CAC46987"/>
    <property type="gene ID" value="SMc01530"/>
</dbReference>
<dbReference type="EnsemblBacteria" id="CAC47345">
    <property type="protein sequence ID" value="CAC47345"/>
    <property type="gene ID" value="SMc03982"/>
</dbReference>
<dbReference type="KEGG" id="sme:SMc01530"/>
<dbReference type="KEGG" id="sme:SMc01612"/>
<dbReference type="KEGG" id="sme:SMc03982"/>
<dbReference type="PATRIC" id="fig|266834.11.peg.3693"/>
<dbReference type="eggNOG" id="COG3328">
    <property type="taxonomic scope" value="Bacteria"/>
</dbReference>
<dbReference type="HOGENOM" id="CLU_036805_8_0_5"/>
<dbReference type="OrthoDB" id="165209at2"/>
<dbReference type="Proteomes" id="UP000001976">
    <property type="component" value="Chromosome"/>
</dbReference>
<dbReference type="GO" id="GO:0003677">
    <property type="term" value="F:DNA binding"/>
    <property type="evidence" value="ECO:0007669"/>
    <property type="project" value="UniProtKB-KW"/>
</dbReference>
<dbReference type="GO" id="GO:0004803">
    <property type="term" value="F:transposase activity"/>
    <property type="evidence" value="ECO:0007669"/>
    <property type="project" value="InterPro"/>
</dbReference>
<dbReference type="GO" id="GO:0006313">
    <property type="term" value="P:DNA transposition"/>
    <property type="evidence" value="ECO:0007669"/>
    <property type="project" value="InterPro"/>
</dbReference>
<dbReference type="InterPro" id="IPR001207">
    <property type="entry name" value="Transposase_mutator"/>
</dbReference>
<dbReference type="NCBIfam" id="NF033543">
    <property type="entry name" value="transpos_IS256"/>
    <property type="match status" value="1"/>
</dbReference>
<dbReference type="PANTHER" id="PTHR33217">
    <property type="entry name" value="TRANSPOSASE FOR INSERTION SEQUENCE ELEMENT IS1081"/>
    <property type="match status" value="1"/>
</dbReference>
<dbReference type="PANTHER" id="PTHR33217:SF7">
    <property type="entry name" value="TRANSPOSASE FOR INSERTION SEQUENCE ELEMENT IS1081"/>
    <property type="match status" value="1"/>
</dbReference>
<dbReference type="Pfam" id="PF00872">
    <property type="entry name" value="Transposase_mut"/>
    <property type="match status" value="1"/>
</dbReference>
<dbReference type="PROSITE" id="PS01007">
    <property type="entry name" value="TRANSPOSASE_MUTATOR"/>
    <property type="match status" value="1"/>
</dbReference>
<comment type="function">
    <text>Required for the transposition of the insertion element.</text>
</comment>
<comment type="similarity">
    <text evidence="1">Belongs to the transposase mutator family.</text>
</comment>
<gene>
    <name type="ordered locus">R02224</name>
    <name type="ORF">SMc01612</name>
</gene>
<gene>
    <name type="ordered locus">R02408</name>
    <name type="ORF">SMc01530</name>
</gene>
<gene>
    <name type="ordered locus">R02766</name>
    <name type="ORF">SMc03982</name>
</gene>
<feature type="chain" id="PRO_0000211353" description="Transposase for insertion sequence element ISRM5">
    <location>
        <begin position="1"/>
        <end position="398"/>
    </location>
</feature>
<keyword id="KW-0233">DNA recombination</keyword>
<keyword id="KW-0238">DNA-binding</keyword>
<keyword id="KW-1185">Reference proteome</keyword>
<keyword id="KW-0814">Transposable element</keyword>
<keyword id="KW-0815">Transposition</keyword>
<organism>
    <name type="scientific">Rhizobium meliloti (strain 1021)</name>
    <name type="common">Ensifer meliloti</name>
    <name type="synonym">Sinorhizobium meliloti</name>
    <dbReference type="NCBI Taxonomy" id="266834"/>
    <lineage>
        <taxon>Bacteria</taxon>
        <taxon>Pseudomonadati</taxon>
        <taxon>Pseudomonadota</taxon>
        <taxon>Alphaproteobacteria</taxon>
        <taxon>Hyphomicrobiales</taxon>
        <taxon>Rhizobiaceae</taxon>
        <taxon>Sinorhizobium/Ensifer group</taxon>
        <taxon>Sinorhizobium</taxon>
    </lineage>
</organism>
<evidence type="ECO:0000305" key="1"/>
<proteinExistence type="inferred from homology"/>
<protein>
    <recommendedName>
        <fullName>Transposase for insertion sequence element ISRM5</fullName>
    </recommendedName>
</protein>
<sequence>MTKTEGKTASAAVKDILLSNPDGLREVIRTVMQEVLEAEMDEALGAAKGERTPERLGYRSGHYGRTLITRVGKLELRVPQDRSGHFSTELFERYQRSERALVATLAEMYVQGVSTRKVKAITEELCGHAFSASSISAINKRLDESLKAFAERSLEEPFAYLILDARYEKVREAGVVMSQAVLIAVGIDWDGRRQILSVEMAGRESRSAWKDFLVRLKGRGLKGVELVVSDDHAGLVAAIGEVIPEAAWQRCYVHFLRNALDHLPRKHGDDCLQELRWLYDRRDLDEAKADLAAWLGKWSVRYPRLTSWVEETIEQTLTFFRLPRQHHKHLKSTNMLERLNEEIRRRTYVVRIFPNTESCLRLVRALAVETHENWMEANRYINMDDLREHKKLALRQAA</sequence>